<feature type="chain" id="PRO_0000206471" description="UPF0735 ACT domain-containing protein CTC_00116">
    <location>
        <begin position="1"/>
        <end position="152"/>
    </location>
</feature>
<feature type="domain" description="ACT" evidence="1">
    <location>
        <begin position="76"/>
        <end position="151"/>
    </location>
</feature>
<organism>
    <name type="scientific">Clostridium tetani (strain Massachusetts / E88)</name>
    <dbReference type="NCBI Taxonomy" id="212717"/>
    <lineage>
        <taxon>Bacteria</taxon>
        <taxon>Bacillati</taxon>
        <taxon>Bacillota</taxon>
        <taxon>Clostridia</taxon>
        <taxon>Eubacteriales</taxon>
        <taxon>Clostridiaceae</taxon>
        <taxon>Clostridium</taxon>
    </lineage>
</organism>
<name>Y116_CLOTE</name>
<evidence type="ECO:0000255" key="1">
    <source>
        <dbReference type="HAMAP-Rule" id="MF_00707"/>
    </source>
</evidence>
<dbReference type="EMBL" id="AE015927">
    <property type="protein sequence ID" value="AAO34768.1"/>
    <property type="molecule type" value="Genomic_DNA"/>
</dbReference>
<dbReference type="STRING" id="212717.CTC_00116"/>
<dbReference type="KEGG" id="ctc:CTC_00116"/>
<dbReference type="HOGENOM" id="CLU_128147_0_0_9"/>
<dbReference type="Proteomes" id="UP000001412">
    <property type="component" value="Chromosome"/>
</dbReference>
<dbReference type="CDD" id="cd04888">
    <property type="entry name" value="ACT_PheB-BS"/>
    <property type="match status" value="1"/>
</dbReference>
<dbReference type="Gene3D" id="3.30.70.260">
    <property type="match status" value="1"/>
</dbReference>
<dbReference type="HAMAP" id="MF_00707">
    <property type="entry name" value="UPF0735"/>
    <property type="match status" value="1"/>
</dbReference>
<dbReference type="InterPro" id="IPR045865">
    <property type="entry name" value="ACT-like_dom_sf"/>
</dbReference>
<dbReference type="InterPro" id="IPR002912">
    <property type="entry name" value="ACT_dom"/>
</dbReference>
<dbReference type="InterPro" id="IPR008310">
    <property type="entry name" value="UPF0735_ACT_dom-cont"/>
</dbReference>
<dbReference type="NCBIfam" id="NF003361">
    <property type="entry name" value="PRK04435.1"/>
    <property type="match status" value="1"/>
</dbReference>
<dbReference type="PIRSF" id="PIRSF025624">
    <property type="entry name" value="ACT_PheB"/>
    <property type="match status" value="1"/>
</dbReference>
<dbReference type="SUPFAM" id="SSF55021">
    <property type="entry name" value="ACT-like"/>
    <property type="match status" value="1"/>
</dbReference>
<dbReference type="PROSITE" id="PS51671">
    <property type="entry name" value="ACT"/>
    <property type="match status" value="1"/>
</dbReference>
<proteinExistence type="inferred from homology"/>
<gene>
    <name type="ordered locus">CTC_00116</name>
</gene>
<sequence length="152" mass="17307">MYIGSDFMKDKYLMINTSVLPDVFEKVIEAKELMKAGKIKEITEAVKVVGISRSTYYKYKDYVFNVSELSSNQKVIISVTLNHRPGTLSKILDKIALYKGNILTINQEIPIHNTANVNITFDISQLNIEFNRLLEEISAMDNVIKLDLIAMD</sequence>
<reference key="1">
    <citation type="journal article" date="2003" name="Proc. Natl. Acad. Sci. U.S.A.">
        <title>The genome sequence of Clostridium tetani, the causative agent of tetanus disease.</title>
        <authorList>
            <person name="Brueggemann H."/>
            <person name="Baeumer S."/>
            <person name="Fricke W.F."/>
            <person name="Wiezer A."/>
            <person name="Liesegang H."/>
            <person name="Decker I."/>
            <person name="Herzberg C."/>
            <person name="Martinez-Arias R."/>
            <person name="Merkl R."/>
            <person name="Henne A."/>
            <person name="Gottschalk G."/>
        </authorList>
    </citation>
    <scope>NUCLEOTIDE SEQUENCE [LARGE SCALE GENOMIC DNA]</scope>
    <source>
        <strain>Massachusetts / E88</strain>
    </source>
</reference>
<accession>Q899Q4</accession>
<keyword id="KW-1185">Reference proteome</keyword>
<comment type="similarity">
    <text evidence="1">Belongs to the UPF0735 family.</text>
</comment>
<protein>
    <recommendedName>
        <fullName evidence="1">UPF0735 ACT domain-containing protein CTC_00116</fullName>
    </recommendedName>
</protein>